<evidence type="ECO:0000250" key="1"/>
<evidence type="ECO:0000255" key="2">
    <source>
        <dbReference type="HAMAP-Rule" id="MF_00047"/>
    </source>
</evidence>
<proteinExistence type="inferred from homology"/>
<comment type="function">
    <text evidence="2">Cell wall formation.</text>
</comment>
<comment type="catalytic activity">
    <reaction evidence="2">
        <text>2 D-alanine + ATP = D-alanyl-D-alanine + ADP + phosphate + H(+)</text>
        <dbReference type="Rhea" id="RHEA:11224"/>
        <dbReference type="ChEBI" id="CHEBI:15378"/>
        <dbReference type="ChEBI" id="CHEBI:30616"/>
        <dbReference type="ChEBI" id="CHEBI:43474"/>
        <dbReference type="ChEBI" id="CHEBI:57416"/>
        <dbReference type="ChEBI" id="CHEBI:57822"/>
        <dbReference type="ChEBI" id="CHEBI:456216"/>
        <dbReference type="EC" id="6.3.2.4"/>
    </reaction>
</comment>
<comment type="cofactor">
    <cofactor evidence="1">
        <name>Mg(2+)</name>
        <dbReference type="ChEBI" id="CHEBI:18420"/>
    </cofactor>
    <cofactor evidence="1">
        <name>Mn(2+)</name>
        <dbReference type="ChEBI" id="CHEBI:29035"/>
    </cofactor>
    <text evidence="1">Binds 2 magnesium or manganese ions per subunit.</text>
</comment>
<comment type="pathway">
    <text evidence="2">Cell wall biogenesis; peptidoglycan biosynthesis.</text>
</comment>
<comment type="subcellular location">
    <subcellularLocation>
        <location evidence="2">Cytoplasm</location>
    </subcellularLocation>
</comment>
<comment type="similarity">
    <text evidence="2">Belongs to the D-alanine--D-alanine ligase family.</text>
</comment>
<gene>
    <name evidence="2" type="primary">ddl</name>
    <name type="ordered locus">IL0438</name>
</gene>
<reference key="1">
    <citation type="journal article" date="2004" name="Proc. Natl. Acad. Sci. U.S.A.">
        <title>Genome sequence of the deep-sea gamma-proteobacterium Idiomarina loihiensis reveals amino acid fermentation as a source of carbon and energy.</title>
        <authorList>
            <person name="Hou S."/>
            <person name="Saw J.H."/>
            <person name="Lee K.S."/>
            <person name="Freitas T.A."/>
            <person name="Belisle C."/>
            <person name="Kawarabayasi Y."/>
            <person name="Donachie S.P."/>
            <person name="Pikina A."/>
            <person name="Galperin M.Y."/>
            <person name="Koonin E.V."/>
            <person name="Makarova K.S."/>
            <person name="Omelchenko M.V."/>
            <person name="Sorokin A."/>
            <person name="Wolf Y.I."/>
            <person name="Li Q.X."/>
            <person name="Keum Y.S."/>
            <person name="Campbell S."/>
            <person name="Denery J."/>
            <person name="Aizawa S."/>
            <person name="Shibata S."/>
            <person name="Malahoff A."/>
            <person name="Alam M."/>
        </authorList>
    </citation>
    <scope>NUCLEOTIDE SEQUENCE [LARGE SCALE GENOMIC DNA]</scope>
    <source>
        <strain>ATCC BAA-735 / DSM 15497 / L2-TR</strain>
    </source>
</reference>
<name>DDL_IDILO</name>
<accession>Q5R0N1</accession>
<feature type="chain" id="PRO_0000341112" description="D-alanine--D-alanine ligase">
    <location>
        <begin position="1"/>
        <end position="309"/>
    </location>
</feature>
<feature type="domain" description="ATP-grasp" evidence="2">
    <location>
        <begin position="105"/>
        <end position="304"/>
    </location>
</feature>
<feature type="binding site" evidence="2">
    <location>
        <begin position="135"/>
        <end position="190"/>
    </location>
    <ligand>
        <name>ATP</name>
        <dbReference type="ChEBI" id="CHEBI:30616"/>
    </ligand>
</feature>
<feature type="binding site" evidence="2">
    <location>
        <position position="258"/>
    </location>
    <ligand>
        <name>Mg(2+)</name>
        <dbReference type="ChEBI" id="CHEBI:18420"/>
        <label>1</label>
    </ligand>
</feature>
<feature type="binding site" evidence="2">
    <location>
        <position position="271"/>
    </location>
    <ligand>
        <name>Mg(2+)</name>
        <dbReference type="ChEBI" id="CHEBI:18420"/>
        <label>1</label>
    </ligand>
</feature>
<feature type="binding site" evidence="2">
    <location>
        <position position="271"/>
    </location>
    <ligand>
        <name>Mg(2+)</name>
        <dbReference type="ChEBI" id="CHEBI:18420"/>
        <label>2</label>
    </ligand>
</feature>
<feature type="binding site" evidence="2">
    <location>
        <position position="273"/>
    </location>
    <ligand>
        <name>Mg(2+)</name>
        <dbReference type="ChEBI" id="CHEBI:18420"/>
        <label>2</label>
    </ligand>
</feature>
<sequence length="309" mass="33424">MKANAFGKVAVMLGGTSAERDVSLKSGMAVLKGLVAKGIDAHAFDPAAHSLQELVEQKFDRVFIALHGRGGEDGSMQGALQILEMPYTGSDVLGCALGMDKVRCKQIWHSVGLPTANWRVVTQAEIEQVNVEAMLQELGGRVIVKPAREGSSIGMSIADNGRSLALALQHAAEFDDDLLVEQWVEGAEYTIGILEGKALPVIRLQTPHEFYDFEAKYQANDTQYHCPAGLSDDDEASLRTLAERAFAAIGGSGWGRIDVMRNNAGEWFLLEANTVPGMTEKSLVPMAAKVAGLQFNDLVERILAQTLER</sequence>
<keyword id="KW-0067">ATP-binding</keyword>
<keyword id="KW-0133">Cell shape</keyword>
<keyword id="KW-0961">Cell wall biogenesis/degradation</keyword>
<keyword id="KW-0963">Cytoplasm</keyword>
<keyword id="KW-0436">Ligase</keyword>
<keyword id="KW-0460">Magnesium</keyword>
<keyword id="KW-0464">Manganese</keyword>
<keyword id="KW-0479">Metal-binding</keyword>
<keyword id="KW-0547">Nucleotide-binding</keyword>
<keyword id="KW-0573">Peptidoglycan synthesis</keyword>
<keyword id="KW-1185">Reference proteome</keyword>
<protein>
    <recommendedName>
        <fullName evidence="2">D-alanine--D-alanine ligase</fullName>
        <ecNumber evidence="2">6.3.2.4</ecNumber>
    </recommendedName>
    <alternativeName>
        <fullName evidence="2">D-Ala-D-Ala ligase</fullName>
    </alternativeName>
    <alternativeName>
        <fullName evidence="2">D-alanylalanine synthetase</fullName>
    </alternativeName>
</protein>
<dbReference type="EC" id="6.3.2.4" evidence="2"/>
<dbReference type="EMBL" id="AE017340">
    <property type="protein sequence ID" value="AAV81281.1"/>
    <property type="molecule type" value="Genomic_DNA"/>
</dbReference>
<dbReference type="RefSeq" id="WP_011233699.1">
    <property type="nucleotide sequence ID" value="NC_006512.1"/>
</dbReference>
<dbReference type="SMR" id="Q5R0N1"/>
<dbReference type="STRING" id="283942.IL0438"/>
<dbReference type="GeneID" id="41335590"/>
<dbReference type="KEGG" id="ilo:IL0438"/>
<dbReference type="eggNOG" id="COG1181">
    <property type="taxonomic scope" value="Bacteria"/>
</dbReference>
<dbReference type="HOGENOM" id="CLU_039268_1_2_6"/>
<dbReference type="OrthoDB" id="9813261at2"/>
<dbReference type="UniPathway" id="UPA00219"/>
<dbReference type="Proteomes" id="UP000001171">
    <property type="component" value="Chromosome"/>
</dbReference>
<dbReference type="GO" id="GO:0005829">
    <property type="term" value="C:cytosol"/>
    <property type="evidence" value="ECO:0007669"/>
    <property type="project" value="TreeGrafter"/>
</dbReference>
<dbReference type="GO" id="GO:0005524">
    <property type="term" value="F:ATP binding"/>
    <property type="evidence" value="ECO:0007669"/>
    <property type="project" value="UniProtKB-KW"/>
</dbReference>
<dbReference type="GO" id="GO:0008716">
    <property type="term" value="F:D-alanine-D-alanine ligase activity"/>
    <property type="evidence" value="ECO:0007669"/>
    <property type="project" value="UniProtKB-UniRule"/>
</dbReference>
<dbReference type="GO" id="GO:0046872">
    <property type="term" value="F:metal ion binding"/>
    <property type="evidence" value="ECO:0007669"/>
    <property type="project" value="UniProtKB-KW"/>
</dbReference>
<dbReference type="GO" id="GO:0071555">
    <property type="term" value="P:cell wall organization"/>
    <property type="evidence" value="ECO:0007669"/>
    <property type="project" value="UniProtKB-KW"/>
</dbReference>
<dbReference type="GO" id="GO:0009252">
    <property type="term" value="P:peptidoglycan biosynthetic process"/>
    <property type="evidence" value="ECO:0007669"/>
    <property type="project" value="UniProtKB-UniRule"/>
</dbReference>
<dbReference type="GO" id="GO:0008360">
    <property type="term" value="P:regulation of cell shape"/>
    <property type="evidence" value="ECO:0007669"/>
    <property type="project" value="UniProtKB-KW"/>
</dbReference>
<dbReference type="FunFam" id="3.30.470.20:FF:000008">
    <property type="entry name" value="D-alanine--D-alanine ligase"/>
    <property type="match status" value="1"/>
</dbReference>
<dbReference type="FunFam" id="3.40.50.20:FF:000013">
    <property type="entry name" value="D-alanine--D-alanine ligase"/>
    <property type="match status" value="1"/>
</dbReference>
<dbReference type="Gene3D" id="3.40.50.20">
    <property type="match status" value="1"/>
</dbReference>
<dbReference type="Gene3D" id="3.30.1490.20">
    <property type="entry name" value="ATP-grasp fold, A domain"/>
    <property type="match status" value="1"/>
</dbReference>
<dbReference type="Gene3D" id="3.30.470.20">
    <property type="entry name" value="ATP-grasp fold, B domain"/>
    <property type="match status" value="1"/>
</dbReference>
<dbReference type="HAMAP" id="MF_00047">
    <property type="entry name" value="Dala_Dala_lig"/>
    <property type="match status" value="1"/>
</dbReference>
<dbReference type="InterPro" id="IPR011761">
    <property type="entry name" value="ATP-grasp"/>
</dbReference>
<dbReference type="InterPro" id="IPR013815">
    <property type="entry name" value="ATP_grasp_subdomain_1"/>
</dbReference>
<dbReference type="InterPro" id="IPR000291">
    <property type="entry name" value="D-Ala_lig_Van_CS"/>
</dbReference>
<dbReference type="InterPro" id="IPR005905">
    <property type="entry name" value="D_ala_D_ala"/>
</dbReference>
<dbReference type="InterPro" id="IPR011095">
    <property type="entry name" value="Dala_Dala_lig_C"/>
</dbReference>
<dbReference type="InterPro" id="IPR011127">
    <property type="entry name" value="Dala_Dala_lig_N"/>
</dbReference>
<dbReference type="InterPro" id="IPR016185">
    <property type="entry name" value="PreATP-grasp_dom_sf"/>
</dbReference>
<dbReference type="NCBIfam" id="TIGR01205">
    <property type="entry name" value="D_ala_D_alaTIGR"/>
    <property type="match status" value="1"/>
</dbReference>
<dbReference type="NCBIfam" id="NF002378">
    <property type="entry name" value="PRK01372.1"/>
    <property type="match status" value="1"/>
</dbReference>
<dbReference type="PANTHER" id="PTHR23132">
    <property type="entry name" value="D-ALANINE--D-ALANINE LIGASE"/>
    <property type="match status" value="1"/>
</dbReference>
<dbReference type="PANTHER" id="PTHR23132:SF23">
    <property type="entry name" value="D-ALANINE--D-ALANINE LIGASE B"/>
    <property type="match status" value="1"/>
</dbReference>
<dbReference type="Pfam" id="PF07478">
    <property type="entry name" value="Dala_Dala_lig_C"/>
    <property type="match status" value="1"/>
</dbReference>
<dbReference type="Pfam" id="PF01820">
    <property type="entry name" value="Dala_Dala_lig_N"/>
    <property type="match status" value="1"/>
</dbReference>
<dbReference type="PIRSF" id="PIRSF039102">
    <property type="entry name" value="Ddl/VanB"/>
    <property type="match status" value="1"/>
</dbReference>
<dbReference type="SUPFAM" id="SSF56059">
    <property type="entry name" value="Glutathione synthetase ATP-binding domain-like"/>
    <property type="match status" value="1"/>
</dbReference>
<dbReference type="SUPFAM" id="SSF52440">
    <property type="entry name" value="PreATP-grasp domain"/>
    <property type="match status" value="1"/>
</dbReference>
<dbReference type="PROSITE" id="PS50975">
    <property type="entry name" value="ATP_GRASP"/>
    <property type="match status" value="1"/>
</dbReference>
<dbReference type="PROSITE" id="PS00843">
    <property type="entry name" value="DALA_DALA_LIGASE_1"/>
    <property type="match status" value="1"/>
</dbReference>
<dbReference type="PROSITE" id="PS00844">
    <property type="entry name" value="DALA_DALA_LIGASE_2"/>
    <property type="match status" value="1"/>
</dbReference>
<organism>
    <name type="scientific">Idiomarina loihiensis (strain ATCC BAA-735 / DSM 15497 / L2-TR)</name>
    <dbReference type="NCBI Taxonomy" id="283942"/>
    <lineage>
        <taxon>Bacteria</taxon>
        <taxon>Pseudomonadati</taxon>
        <taxon>Pseudomonadota</taxon>
        <taxon>Gammaproteobacteria</taxon>
        <taxon>Alteromonadales</taxon>
        <taxon>Idiomarinaceae</taxon>
        <taxon>Idiomarina</taxon>
    </lineage>
</organism>